<accession>Q6CA08</accession>
<sequence>MTEVVPRTVLYCGVCTLPPEYCEFGGAFKRCKAWLEDNDQELFAQLYSVEALTNAVQASSISAEKQEEIDRKLQKQQQKDEAKAERELLKKLASKVVIKRIERSKRKRIISVSGLEVFELDLKKLSKTFSSKFATGASVTKTADGKEEIVIQGDVGDGVEELITQMLKEKGLNQVKVEQIDEKKKKKE</sequence>
<protein>
    <recommendedName>
        <fullName>Translation machinery-associated protein 22</fullName>
    </recommendedName>
</protein>
<organism>
    <name type="scientific">Yarrowia lipolytica (strain CLIB 122 / E 150)</name>
    <name type="common">Yeast</name>
    <name type="synonym">Candida lipolytica</name>
    <dbReference type="NCBI Taxonomy" id="284591"/>
    <lineage>
        <taxon>Eukaryota</taxon>
        <taxon>Fungi</taxon>
        <taxon>Dikarya</taxon>
        <taxon>Ascomycota</taxon>
        <taxon>Saccharomycotina</taxon>
        <taxon>Dipodascomycetes</taxon>
        <taxon>Dipodascales</taxon>
        <taxon>Dipodascales incertae sedis</taxon>
        <taxon>Yarrowia</taxon>
    </lineage>
</organism>
<proteinExistence type="inferred from homology"/>
<keyword id="KW-0963">Cytoplasm</keyword>
<keyword id="KW-1185">Reference proteome</keyword>
<keyword id="KW-0687">Ribonucleoprotein</keyword>
<keyword id="KW-0689">Ribosomal protein</keyword>
<feature type="chain" id="PRO_0000320451" description="Translation machinery-associated protein 22">
    <location>
        <begin position="1"/>
        <end position="188"/>
    </location>
</feature>
<feature type="domain" description="SUI1" evidence="2">
    <location>
        <begin position="96"/>
        <end position="167"/>
    </location>
</feature>
<name>DENR_YARLI</name>
<reference key="1">
    <citation type="journal article" date="2004" name="Nature">
        <title>Genome evolution in yeasts.</title>
        <authorList>
            <person name="Dujon B."/>
            <person name="Sherman D."/>
            <person name="Fischer G."/>
            <person name="Durrens P."/>
            <person name="Casaregola S."/>
            <person name="Lafontaine I."/>
            <person name="de Montigny J."/>
            <person name="Marck C."/>
            <person name="Neuveglise C."/>
            <person name="Talla E."/>
            <person name="Goffard N."/>
            <person name="Frangeul L."/>
            <person name="Aigle M."/>
            <person name="Anthouard V."/>
            <person name="Babour A."/>
            <person name="Barbe V."/>
            <person name="Barnay S."/>
            <person name="Blanchin S."/>
            <person name="Beckerich J.-M."/>
            <person name="Beyne E."/>
            <person name="Bleykasten C."/>
            <person name="Boisrame A."/>
            <person name="Boyer J."/>
            <person name="Cattolico L."/>
            <person name="Confanioleri F."/>
            <person name="de Daruvar A."/>
            <person name="Despons L."/>
            <person name="Fabre E."/>
            <person name="Fairhead C."/>
            <person name="Ferry-Dumazet H."/>
            <person name="Groppi A."/>
            <person name="Hantraye F."/>
            <person name="Hennequin C."/>
            <person name="Jauniaux N."/>
            <person name="Joyet P."/>
            <person name="Kachouri R."/>
            <person name="Kerrest A."/>
            <person name="Koszul R."/>
            <person name="Lemaire M."/>
            <person name="Lesur I."/>
            <person name="Ma L."/>
            <person name="Muller H."/>
            <person name="Nicaud J.-M."/>
            <person name="Nikolski M."/>
            <person name="Oztas S."/>
            <person name="Ozier-Kalogeropoulos O."/>
            <person name="Pellenz S."/>
            <person name="Potier S."/>
            <person name="Richard G.-F."/>
            <person name="Straub M.-L."/>
            <person name="Suleau A."/>
            <person name="Swennen D."/>
            <person name="Tekaia F."/>
            <person name="Wesolowski-Louvel M."/>
            <person name="Westhof E."/>
            <person name="Wirth B."/>
            <person name="Zeniou-Meyer M."/>
            <person name="Zivanovic Y."/>
            <person name="Bolotin-Fukuhara M."/>
            <person name="Thierry A."/>
            <person name="Bouchier C."/>
            <person name="Caudron B."/>
            <person name="Scarpelli C."/>
            <person name="Gaillardin C."/>
            <person name="Weissenbach J."/>
            <person name="Wincker P."/>
            <person name="Souciet J.-L."/>
        </authorList>
    </citation>
    <scope>NUCLEOTIDE SEQUENCE [LARGE SCALE GENOMIC DNA]</scope>
    <source>
        <strain>CLIB 122 / E 150</strain>
    </source>
</reference>
<dbReference type="EMBL" id="CR382130">
    <property type="protein sequence ID" value="CAG80692.1"/>
    <property type="molecule type" value="Genomic_DNA"/>
</dbReference>
<dbReference type="RefSeq" id="XP_502504.1">
    <property type="nucleotide sequence ID" value="XM_502504.1"/>
</dbReference>
<dbReference type="SMR" id="Q6CA08"/>
<dbReference type="FunCoup" id="Q6CA08">
    <property type="interactions" value="1259"/>
</dbReference>
<dbReference type="STRING" id="284591.Q6CA08"/>
<dbReference type="EnsemblFungi" id="CAG80692">
    <property type="protein sequence ID" value="CAG80692"/>
    <property type="gene ID" value="YALI0_D06842g"/>
</dbReference>
<dbReference type="KEGG" id="yli:2910507"/>
<dbReference type="VEuPathDB" id="FungiDB:YALI0_D06842g"/>
<dbReference type="HOGENOM" id="CLU_073511_0_1_1"/>
<dbReference type="InParanoid" id="Q6CA08"/>
<dbReference type="OMA" id="EVFEIDM"/>
<dbReference type="OrthoDB" id="3879at4891"/>
<dbReference type="Proteomes" id="UP000001300">
    <property type="component" value="Chromosome D"/>
</dbReference>
<dbReference type="GO" id="GO:0005737">
    <property type="term" value="C:cytoplasm"/>
    <property type="evidence" value="ECO:0007669"/>
    <property type="project" value="UniProtKB-SubCell"/>
</dbReference>
<dbReference type="GO" id="GO:1990904">
    <property type="term" value="C:ribonucleoprotein complex"/>
    <property type="evidence" value="ECO:0007669"/>
    <property type="project" value="UniProtKB-KW"/>
</dbReference>
<dbReference type="GO" id="GO:0005840">
    <property type="term" value="C:ribosome"/>
    <property type="evidence" value="ECO:0007669"/>
    <property type="project" value="UniProtKB-KW"/>
</dbReference>
<dbReference type="GO" id="GO:0003743">
    <property type="term" value="F:translation initiation factor activity"/>
    <property type="evidence" value="ECO:0007669"/>
    <property type="project" value="InterPro"/>
</dbReference>
<dbReference type="GO" id="GO:0001731">
    <property type="term" value="P:formation of translation preinitiation complex"/>
    <property type="evidence" value="ECO:0000318"/>
    <property type="project" value="GO_Central"/>
</dbReference>
<dbReference type="GO" id="GO:0002188">
    <property type="term" value="P:translation reinitiation"/>
    <property type="evidence" value="ECO:0000318"/>
    <property type="project" value="GO_Central"/>
</dbReference>
<dbReference type="CDD" id="cd11607">
    <property type="entry name" value="DENR_C"/>
    <property type="match status" value="1"/>
</dbReference>
<dbReference type="FunFam" id="3.30.780.10:FF:000013">
    <property type="entry name" value="Translation machinery-associated protein 22"/>
    <property type="match status" value="1"/>
</dbReference>
<dbReference type="Gene3D" id="3.30.780.10">
    <property type="entry name" value="SUI1-like domain"/>
    <property type="match status" value="1"/>
</dbReference>
<dbReference type="InterPro" id="IPR050318">
    <property type="entry name" value="DENR/SUI1_TIF"/>
</dbReference>
<dbReference type="InterPro" id="IPR046447">
    <property type="entry name" value="DENR_C"/>
</dbReference>
<dbReference type="InterPro" id="IPR005873">
    <property type="entry name" value="DENR_eukaryotes"/>
</dbReference>
<dbReference type="InterPro" id="IPR048517">
    <property type="entry name" value="DENR_N"/>
</dbReference>
<dbReference type="InterPro" id="IPR001950">
    <property type="entry name" value="SUI1"/>
</dbReference>
<dbReference type="InterPro" id="IPR036877">
    <property type="entry name" value="SUI1_dom_sf"/>
</dbReference>
<dbReference type="NCBIfam" id="TIGR01159">
    <property type="entry name" value="DRP1"/>
    <property type="match status" value="1"/>
</dbReference>
<dbReference type="PANTHER" id="PTHR12789:SF0">
    <property type="entry name" value="DENSITY-REGULATED PROTEIN"/>
    <property type="match status" value="1"/>
</dbReference>
<dbReference type="PANTHER" id="PTHR12789">
    <property type="entry name" value="DENSITY-REGULATED PROTEIN HOMOLOG"/>
    <property type="match status" value="1"/>
</dbReference>
<dbReference type="Pfam" id="PF21023">
    <property type="entry name" value="DENR_N"/>
    <property type="match status" value="1"/>
</dbReference>
<dbReference type="Pfam" id="PF01253">
    <property type="entry name" value="SUI1"/>
    <property type="match status" value="1"/>
</dbReference>
<dbReference type="SUPFAM" id="SSF55159">
    <property type="entry name" value="eIF1-like"/>
    <property type="match status" value="1"/>
</dbReference>
<dbReference type="PROSITE" id="PS50296">
    <property type="entry name" value="SUI1"/>
    <property type="match status" value="1"/>
</dbReference>
<comment type="subunit">
    <text evidence="1">Interacts with the 40S ribosomal subunit.</text>
</comment>
<comment type="subcellular location">
    <subcellularLocation>
        <location evidence="1">Cytoplasm</location>
    </subcellularLocation>
</comment>
<comment type="domain">
    <text>The SUI1 domain may be involved in RNA binding.</text>
</comment>
<comment type="similarity">
    <text evidence="3">Belongs to the DENR family.</text>
</comment>
<gene>
    <name type="primary">TMA22</name>
    <name type="ordered locus">YALI0D06842g</name>
</gene>
<evidence type="ECO:0000250" key="1"/>
<evidence type="ECO:0000255" key="2">
    <source>
        <dbReference type="PROSITE-ProRule" id="PRU00200"/>
    </source>
</evidence>
<evidence type="ECO:0000305" key="3"/>